<reference key="1">
    <citation type="submission" date="2002-12" db="EMBL/GenBank/DDBJ databases">
        <title>Complete genome sequence of Vibrio vulnificus CMCP6.</title>
        <authorList>
            <person name="Rhee J.H."/>
            <person name="Kim S.Y."/>
            <person name="Chung S.S."/>
            <person name="Kim J.J."/>
            <person name="Moon Y.H."/>
            <person name="Jeong H."/>
            <person name="Choy H.E."/>
        </authorList>
    </citation>
    <scope>NUCLEOTIDE SEQUENCE [LARGE SCALE GENOMIC DNA]</scope>
    <source>
        <strain>CMCP6</strain>
    </source>
</reference>
<keyword id="KW-0067">ATP-binding</keyword>
<keyword id="KW-0436">Ligase</keyword>
<keyword id="KW-0547">Nucleotide-binding</keyword>
<keyword id="KW-0658">Purine biosynthesis</keyword>
<accession>Q8DDD8</accession>
<organism>
    <name type="scientific">Vibrio vulnificus (strain CMCP6)</name>
    <dbReference type="NCBI Taxonomy" id="216895"/>
    <lineage>
        <taxon>Bacteria</taxon>
        <taxon>Pseudomonadati</taxon>
        <taxon>Pseudomonadota</taxon>
        <taxon>Gammaproteobacteria</taxon>
        <taxon>Vibrionales</taxon>
        <taxon>Vibrionaceae</taxon>
        <taxon>Vibrio</taxon>
    </lineage>
</organism>
<protein>
    <recommendedName>
        <fullName evidence="1">N5-carboxyaminoimidazole ribonucleotide synthase</fullName>
        <shortName evidence="1">N5-CAIR synthase</shortName>
        <ecNumber evidence="1">6.3.4.18</ecNumber>
    </recommendedName>
    <alternativeName>
        <fullName evidence="1">5-(carboxyamino)imidazole ribonucleotide synthetase</fullName>
    </alternativeName>
</protein>
<evidence type="ECO:0000255" key="1">
    <source>
        <dbReference type="HAMAP-Rule" id="MF_01928"/>
    </source>
</evidence>
<sequence>MHVLVLGAGQLARMMSLAGAPLNIQISAYDVTTGDVVHPLTLHLLGHGLEQAIEYVDVITAEFEHIPHDVLAICQASGKFLPSSEAIKAGGDRRLEKALLDHAGVRNANYYVIETREDFNKAIEHVGIPMVLKSALGGYDGKGQWRLKDAAQIETLWQEMAACIAATPTQAIVAEEFVPFQREVSLIGARGKEGQIEVYPLAENIHVNGVLSLSTAIDSPDLQEQAKHMFTAVAETLNYVGVLALEFFDVDGQLLVNEIAPRVHNSGHWTQQGAETCQFENHLRAVCGLPLGSTKLVRETSMINILGEDTLPASVMAMDGCHIHWYGKEKRAGRKMGHINVCGDYSGELQRRLCALANVLDEKAFPAVHEFAKKWQA</sequence>
<gene>
    <name evidence="1" type="primary">purK</name>
    <name type="ordered locus">VV1_1053</name>
</gene>
<name>PURK_VIBVU</name>
<dbReference type="EC" id="6.3.4.18" evidence="1"/>
<dbReference type="EMBL" id="AE016795">
    <property type="protein sequence ID" value="AAO09540.1"/>
    <property type="molecule type" value="Genomic_DNA"/>
</dbReference>
<dbReference type="RefSeq" id="WP_011079086.1">
    <property type="nucleotide sequence ID" value="NC_004459.3"/>
</dbReference>
<dbReference type="SMR" id="Q8DDD8"/>
<dbReference type="KEGG" id="vvu:VV1_1053"/>
<dbReference type="HOGENOM" id="CLU_011534_0_0_6"/>
<dbReference type="UniPathway" id="UPA00074">
    <property type="reaction ID" value="UER00942"/>
</dbReference>
<dbReference type="Proteomes" id="UP000002275">
    <property type="component" value="Chromosome 1"/>
</dbReference>
<dbReference type="GO" id="GO:0005829">
    <property type="term" value="C:cytosol"/>
    <property type="evidence" value="ECO:0007669"/>
    <property type="project" value="TreeGrafter"/>
</dbReference>
<dbReference type="GO" id="GO:0034028">
    <property type="term" value="F:5-(carboxyamino)imidazole ribonucleotide synthase activity"/>
    <property type="evidence" value="ECO:0007669"/>
    <property type="project" value="UniProtKB-UniRule"/>
</dbReference>
<dbReference type="GO" id="GO:0005524">
    <property type="term" value="F:ATP binding"/>
    <property type="evidence" value="ECO:0007669"/>
    <property type="project" value="UniProtKB-KW"/>
</dbReference>
<dbReference type="GO" id="GO:0046872">
    <property type="term" value="F:metal ion binding"/>
    <property type="evidence" value="ECO:0007669"/>
    <property type="project" value="InterPro"/>
</dbReference>
<dbReference type="GO" id="GO:0004638">
    <property type="term" value="F:phosphoribosylaminoimidazole carboxylase activity"/>
    <property type="evidence" value="ECO:0007669"/>
    <property type="project" value="InterPro"/>
</dbReference>
<dbReference type="GO" id="GO:0006189">
    <property type="term" value="P:'de novo' IMP biosynthetic process"/>
    <property type="evidence" value="ECO:0007669"/>
    <property type="project" value="UniProtKB-UniRule"/>
</dbReference>
<dbReference type="FunFam" id="3.30.1490.20:FF:000015">
    <property type="entry name" value="N5-carboxyaminoimidazole ribonucleotide synthase"/>
    <property type="match status" value="1"/>
</dbReference>
<dbReference type="FunFam" id="3.30.470.20:FF:000029">
    <property type="entry name" value="N5-carboxyaminoimidazole ribonucleotide synthase"/>
    <property type="match status" value="1"/>
</dbReference>
<dbReference type="Gene3D" id="3.40.50.20">
    <property type="match status" value="1"/>
</dbReference>
<dbReference type="Gene3D" id="3.30.1490.20">
    <property type="entry name" value="ATP-grasp fold, A domain"/>
    <property type="match status" value="1"/>
</dbReference>
<dbReference type="Gene3D" id="3.30.470.20">
    <property type="entry name" value="ATP-grasp fold, B domain"/>
    <property type="match status" value="1"/>
</dbReference>
<dbReference type="HAMAP" id="MF_01928">
    <property type="entry name" value="PurK"/>
    <property type="match status" value="1"/>
</dbReference>
<dbReference type="InterPro" id="IPR011761">
    <property type="entry name" value="ATP-grasp"/>
</dbReference>
<dbReference type="InterPro" id="IPR003135">
    <property type="entry name" value="ATP-grasp_carboxylate-amine"/>
</dbReference>
<dbReference type="InterPro" id="IPR013815">
    <property type="entry name" value="ATP_grasp_subdomain_1"/>
</dbReference>
<dbReference type="InterPro" id="IPR016185">
    <property type="entry name" value="PreATP-grasp_dom_sf"/>
</dbReference>
<dbReference type="InterPro" id="IPR005875">
    <property type="entry name" value="PurK"/>
</dbReference>
<dbReference type="InterPro" id="IPR040686">
    <property type="entry name" value="PurK_C"/>
</dbReference>
<dbReference type="InterPro" id="IPR054350">
    <property type="entry name" value="PurT/PurK_preATP-grasp"/>
</dbReference>
<dbReference type="InterPro" id="IPR011054">
    <property type="entry name" value="Rudment_hybrid_motif"/>
</dbReference>
<dbReference type="NCBIfam" id="NF004679">
    <property type="entry name" value="PRK06019.1-5"/>
    <property type="match status" value="1"/>
</dbReference>
<dbReference type="NCBIfam" id="TIGR01161">
    <property type="entry name" value="purK"/>
    <property type="match status" value="1"/>
</dbReference>
<dbReference type="PANTHER" id="PTHR11609:SF5">
    <property type="entry name" value="PHOSPHORIBOSYLAMINOIMIDAZOLE CARBOXYLASE"/>
    <property type="match status" value="1"/>
</dbReference>
<dbReference type="PANTHER" id="PTHR11609">
    <property type="entry name" value="PURINE BIOSYNTHESIS PROTEIN 6/7, PUR6/7"/>
    <property type="match status" value="1"/>
</dbReference>
<dbReference type="Pfam" id="PF02222">
    <property type="entry name" value="ATP-grasp"/>
    <property type="match status" value="1"/>
</dbReference>
<dbReference type="Pfam" id="PF17769">
    <property type="entry name" value="PurK_C"/>
    <property type="match status" value="1"/>
</dbReference>
<dbReference type="Pfam" id="PF22660">
    <property type="entry name" value="RS_preATP-grasp-like"/>
    <property type="match status" value="1"/>
</dbReference>
<dbReference type="SUPFAM" id="SSF56059">
    <property type="entry name" value="Glutathione synthetase ATP-binding domain-like"/>
    <property type="match status" value="1"/>
</dbReference>
<dbReference type="SUPFAM" id="SSF52440">
    <property type="entry name" value="PreATP-grasp domain"/>
    <property type="match status" value="1"/>
</dbReference>
<dbReference type="SUPFAM" id="SSF51246">
    <property type="entry name" value="Rudiment single hybrid motif"/>
    <property type="match status" value="1"/>
</dbReference>
<dbReference type="PROSITE" id="PS50975">
    <property type="entry name" value="ATP_GRASP"/>
    <property type="match status" value="1"/>
</dbReference>
<comment type="function">
    <text evidence="1">Catalyzes the ATP-dependent conversion of 5-aminoimidazole ribonucleotide (AIR) and HCO(3)(-) to N5-carboxyaminoimidazole ribonucleotide (N5-CAIR).</text>
</comment>
<comment type="catalytic activity">
    <reaction evidence="1">
        <text>5-amino-1-(5-phospho-beta-D-ribosyl)imidazole + hydrogencarbonate + ATP = 5-carboxyamino-1-(5-phospho-D-ribosyl)imidazole + ADP + phosphate + 2 H(+)</text>
        <dbReference type="Rhea" id="RHEA:19317"/>
        <dbReference type="ChEBI" id="CHEBI:15378"/>
        <dbReference type="ChEBI" id="CHEBI:17544"/>
        <dbReference type="ChEBI" id="CHEBI:30616"/>
        <dbReference type="ChEBI" id="CHEBI:43474"/>
        <dbReference type="ChEBI" id="CHEBI:58730"/>
        <dbReference type="ChEBI" id="CHEBI:137981"/>
        <dbReference type="ChEBI" id="CHEBI:456216"/>
        <dbReference type="EC" id="6.3.4.18"/>
    </reaction>
</comment>
<comment type="pathway">
    <text evidence="1">Purine metabolism; IMP biosynthesis via de novo pathway; 5-amino-1-(5-phospho-D-ribosyl)imidazole-4-carboxylate from 5-amino-1-(5-phospho-D-ribosyl)imidazole (N5-CAIR route): step 1/2.</text>
</comment>
<comment type="subunit">
    <text evidence="1">Homodimer.</text>
</comment>
<comment type="similarity">
    <text evidence="1">Belongs to the PurK/PurT family.</text>
</comment>
<feature type="chain" id="PRO_0000075018" description="N5-carboxyaminoimidazole ribonucleotide synthase">
    <location>
        <begin position="1"/>
        <end position="377"/>
    </location>
</feature>
<feature type="domain" description="ATP-grasp" evidence="1">
    <location>
        <begin position="97"/>
        <end position="287"/>
    </location>
</feature>
<feature type="binding site" evidence="1">
    <location>
        <position position="93"/>
    </location>
    <ligand>
        <name>ATP</name>
        <dbReference type="ChEBI" id="CHEBI:30616"/>
    </ligand>
</feature>
<feature type="binding site" evidence="1">
    <location>
        <position position="133"/>
    </location>
    <ligand>
        <name>ATP</name>
        <dbReference type="ChEBI" id="CHEBI:30616"/>
    </ligand>
</feature>
<feature type="binding site" evidence="1">
    <location>
        <begin position="138"/>
        <end position="144"/>
    </location>
    <ligand>
        <name>ATP</name>
        <dbReference type="ChEBI" id="CHEBI:30616"/>
    </ligand>
</feature>
<feature type="binding site" evidence="1">
    <location>
        <begin position="175"/>
        <end position="178"/>
    </location>
    <ligand>
        <name>ATP</name>
        <dbReference type="ChEBI" id="CHEBI:30616"/>
    </ligand>
</feature>
<feature type="binding site" evidence="1">
    <location>
        <position position="183"/>
    </location>
    <ligand>
        <name>ATP</name>
        <dbReference type="ChEBI" id="CHEBI:30616"/>
    </ligand>
</feature>
<feature type="binding site" evidence="1">
    <location>
        <position position="206"/>
    </location>
    <ligand>
        <name>ATP</name>
        <dbReference type="ChEBI" id="CHEBI:30616"/>
    </ligand>
</feature>
<feature type="binding site" evidence="1">
    <location>
        <begin position="257"/>
        <end position="258"/>
    </location>
    <ligand>
        <name>ATP</name>
        <dbReference type="ChEBI" id="CHEBI:30616"/>
    </ligand>
</feature>
<proteinExistence type="inferred from homology"/>